<gene>
    <name evidence="4" type="primary">PGLS</name>
</gene>
<evidence type="ECO:0000250" key="1"/>
<evidence type="ECO:0000269" key="2">
    <source>
    </source>
</evidence>
<evidence type="ECO:0000305" key="3"/>
<evidence type="ECO:0000312" key="4">
    <source>
        <dbReference type="HGNC" id="HGNC:8903"/>
    </source>
</evidence>
<evidence type="ECO:0007744" key="5">
    <source>
    </source>
</evidence>
<evidence type="ECO:0007744" key="6">
    <source>
    </source>
</evidence>
<evidence type="ECO:0007744" key="7">
    <source>
    </source>
</evidence>
<evidence type="ECO:0007744" key="8">
    <source>
    </source>
</evidence>
<comment type="function">
    <text evidence="2">Hydrolysis of 6-phosphogluconolactone to 6-phosphogluconate.</text>
</comment>
<comment type="catalytic activity">
    <reaction evidence="2">
        <text>6-phospho-D-glucono-1,5-lactone + H2O = 6-phospho-D-gluconate + H(+)</text>
        <dbReference type="Rhea" id="RHEA:12556"/>
        <dbReference type="ChEBI" id="CHEBI:15377"/>
        <dbReference type="ChEBI" id="CHEBI:15378"/>
        <dbReference type="ChEBI" id="CHEBI:57955"/>
        <dbReference type="ChEBI" id="CHEBI:58759"/>
        <dbReference type="EC" id="3.1.1.31"/>
    </reaction>
</comment>
<comment type="pathway">
    <text evidence="2">Carbohydrate degradation; pentose phosphate pathway; D-ribulose 5-phosphate from D-glucose 6-phosphate (oxidative stage): step 2/3.</text>
</comment>
<comment type="interaction">
    <interactant intactId="EBI-11307753">
        <id>O95336</id>
    </interactant>
    <interactant intactId="EBI-718504">
        <id>Q13867</id>
        <label>BLMH</label>
    </interactant>
    <organismsDiffer>false</organismsDiffer>
    <experiments>3</experiments>
</comment>
<comment type="interaction">
    <interactant intactId="EBI-11307753">
        <id>O95336</id>
    </interactant>
    <interactant intactId="EBI-750109">
        <id>Q9NYB0</id>
        <label>TERF2IP</label>
    </interactant>
    <organismsDiffer>false</organismsDiffer>
    <experiments>2</experiments>
</comment>
<comment type="subcellular location">
    <subcellularLocation>
        <location evidence="1">Cytoplasm</location>
    </subcellularLocation>
</comment>
<comment type="similarity">
    <text evidence="3">Belongs to the glucosamine/galactosamine-6-phosphate isomerase family. 6-phosphogluconolactonase subfamily.</text>
</comment>
<comment type="sequence caution" evidence="3">
    <conflict type="erroneous initiation">
        <sequence resource="EMBL-CDS" id="AAC72960"/>
    </conflict>
</comment>
<dbReference type="EC" id="3.1.1.31" evidence="2"/>
<dbReference type="EMBL" id="AJ243972">
    <property type="protein sequence ID" value="CAB57866.1"/>
    <property type="molecule type" value="mRNA"/>
</dbReference>
<dbReference type="EMBL" id="BC014006">
    <property type="protein sequence ID" value="AAH14006.1"/>
    <property type="molecule type" value="mRNA"/>
</dbReference>
<dbReference type="EMBL" id="AF091091">
    <property type="protein sequence ID" value="AAC72960.1"/>
    <property type="status" value="ALT_INIT"/>
    <property type="molecule type" value="mRNA"/>
</dbReference>
<dbReference type="CCDS" id="CCDS12361.1"/>
<dbReference type="RefSeq" id="NP_036220.1">
    <property type="nucleotide sequence ID" value="NM_012088.3"/>
</dbReference>
<dbReference type="SMR" id="O95336"/>
<dbReference type="BioGRID" id="117328">
    <property type="interactions" value="76"/>
</dbReference>
<dbReference type="FunCoup" id="O95336">
    <property type="interactions" value="1193"/>
</dbReference>
<dbReference type="IntAct" id="O95336">
    <property type="interactions" value="8"/>
</dbReference>
<dbReference type="STRING" id="9606.ENSP00000252603"/>
<dbReference type="GlyCosmos" id="O95336">
    <property type="glycosylation" value="1 site, 2 glycans"/>
</dbReference>
<dbReference type="GlyGen" id="O95336">
    <property type="glycosylation" value="1 site, 2 O-linked glycans (1 site)"/>
</dbReference>
<dbReference type="iPTMnet" id="O95336"/>
<dbReference type="PhosphoSitePlus" id="O95336"/>
<dbReference type="SwissPalm" id="O95336"/>
<dbReference type="BioMuta" id="PGLS"/>
<dbReference type="OGP" id="O95336"/>
<dbReference type="REPRODUCTION-2DPAGE" id="IPI00029997"/>
<dbReference type="CPTAC" id="CPTAC-2712"/>
<dbReference type="jPOST" id="O95336"/>
<dbReference type="MassIVE" id="O95336"/>
<dbReference type="PaxDb" id="9606-ENSP00000252603"/>
<dbReference type="PeptideAtlas" id="O95336"/>
<dbReference type="ProteomicsDB" id="50807"/>
<dbReference type="Pumba" id="O95336"/>
<dbReference type="TopDownProteomics" id="O95336"/>
<dbReference type="Antibodypedia" id="27708">
    <property type="antibodies" value="209 antibodies from 30 providers"/>
</dbReference>
<dbReference type="DNASU" id="25796"/>
<dbReference type="Ensembl" id="ENST00000252603.7">
    <property type="protein sequence ID" value="ENSP00000252603.1"/>
    <property type="gene ID" value="ENSG00000130313.7"/>
</dbReference>
<dbReference type="GeneID" id="25796"/>
<dbReference type="KEGG" id="hsa:25796"/>
<dbReference type="MANE-Select" id="ENST00000252603.7">
    <property type="protein sequence ID" value="ENSP00000252603.1"/>
    <property type="RefSeq nucleotide sequence ID" value="NM_012088.3"/>
    <property type="RefSeq protein sequence ID" value="NP_036220.1"/>
</dbReference>
<dbReference type="UCSC" id="uc002ngw.4">
    <property type="organism name" value="human"/>
</dbReference>
<dbReference type="AGR" id="HGNC:8903"/>
<dbReference type="CTD" id="25796"/>
<dbReference type="DisGeNET" id="25796"/>
<dbReference type="GeneCards" id="PGLS"/>
<dbReference type="HGNC" id="HGNC:8903">
    <property type="gene designation" value="PGLS"/>
</dbReference>
<dbReference type="HPA" id="ENSG00000130313">
    <property type="expression patterns" value="Low tissue specificity"/>
</dbReference>
<dbReference type="MIM" id="604951">
    <property type="type" value="gene"/>
</dbReference>
<dbReference type="neXtProt" id="NX_O95336"/>
<dbReference type="OpenTargets" id="ENSG00000130313"/>
<dbReference type="PharmGKB" id="PA33240"/>
<dbReference type="VEuPathDB" id="HostDB:ENSG00000130313"/>
<dbReference type="eggNOG" id="KOG3147">
    <property type="taxonomic scope" value="Eukaryota"/>
</dbReference>
<dbReference type="GeneTree" id="ENSGT00550000075110"/>
<dbReference type="HOGENOM" id="CLU_053947_0_2_1"/>
<dbReference type="InParanoid" id="O95336"/>
<dbReference type="OMA" id="YQLFEFE"/>
<dbReference type="OrthoDB" id="432544at2759"/>
<dbReference type="PAN-GO" id="O95336">
    <property type="GO annotations" value="3 GO annotations based on evolutionary models"/>
</dbReference>
<dbReference type="PhylomeDB" id="O95336"/>
<dbReference type="TreeFam" id="TF318609"/>
<dbReference type="BioCyc" id="MetaCyc:HS05370-MONOMER"/>
<dbReference type="BRENDA" id="3.1.1.31">
    <property type="organism ID" value="2681"/>
</dbReference>
<dbReference type="PathwayCommons" id="O95336"/>
<dbReference type="Reactome" id="R-HSA-71336">
    <property type="pathway name" value="Pentose phosphate pathway"/>
</dbReference>
<dbReference type="SignaLink" id="O95336"/>
<dbReference type="SIGNOR" id="O95336"/>
<dbReference type="UniPathway" id="UPA00115">
    <property type="reaction ID" value="UER00409"/>
</dbReference>
<dbReference type="BioGRID-ORCS" id="25796">
    <property type="hits" value="76 hits in 1151 CRISPR screens"/>
</dbReference>
<dbReference type="CD-CODE" id="91857CE7">
    <property type="entry name" value="Nucleolus"/>
</dbReference>
<dbReference type="ChiTaRS" id="PGLS">
    <property type="organism name" value="human"/>
</dbReference>
<dbReference type="GenomeRNAi" id="25796"/>
<dbReference type="Pharos" id="O95336">
    <property type="development level" value="Tbio"/>
</dbReference>
<dbReference type="PRO" id="PR:O95336"/>
<dbReference type="Proteomes" id="UP000005640">
    <property type="component" value="Chromosome 19"/>
</dbReference>
<dbReference type="RNAct" id="O95336">
    <property type="molecule type" value="protein"/>
</dbReference>
<dbReference type="Bgee" id="ENSG00000130313">
    <property type="expression patterns" value="Expressed in granulocyte and 194 other cell types or tissues"/>
</dbReference>
<dbReference type="ExpressionAtlas" id="O95336">
    <property type="expression patterns" value="baseline and differential"/>
</dbReference>
<dbReference type="GO" id="GO:0005829">
    <property type="term" value="C:cytosol"/>
    <property type="evidence" value="ECO:0000318"/>
    <property type="project" value="GO_Central"/>
</dbReference>
<dbReference type="GO" id="GO:0070062">
    <property type="term" value="C:extracellular exosome"/>
    <property type="evidence" value="ECO:0007005"/>
    <property type="project" value="UniProtKB"/>
</dbReference>
<dbReference type="GO" id="GO:0017057">
    <property type="term" value="F:6-phosphogluconolactonase activity"/>
    <property type="evidence" value="ECO:0000314"/>
    <property type="project" value="UniProtKB"/>
</dbReference>
<dbReference type="GO" id="GO:0005975">
    <property type="term" value="P:carbohydrate metabolic process"/>
    <property type="evidence" value="ECO:0007669"/>
    <property type="project" value="InterPro"/>
</dbReference>
<dbReference type="GO" id="GO:0006098">
    <property type="term" value="P:pentose-phosphate shunt"/>
    <property type="evidence" value="ECO:0000314"/>
    <property type="project" value="UniProtKB"/>
</dbReference>
<dbReference type="GO" id="GO:0009051">
    <property type="term" value="P:pentose-phosphate shunt, oxidative branch"/>
    <property type="evidence" value="ECO:0000318"/>
    <property type="project" value="GO_Central"/>
</dbReference>
<dbReference type="CDD" id="cd01400">
    <property type="entry name" value="6PGL"/>
    <property type="match status" value="1"/>
</dbReference>
<dbReference type="FunFam" id="3.40.50.1360:FF:000005">
    <property type="entry name" value="6-phosphogluconolactonase"/>
    <property type="match status" value="1"/>
</dbReference>
<dbReference type="Gene3D" id="3.40.50.1360">
    <property type="match status" value="1"/>
</dbReference>
<dbReference type="InterPro" id="IPR005900">
    <property type="entry name" value="6-phosphogluconolactonase_DevB"/>
</dbReference>
<dbReference type="InterPro" id="IPR006148">
    <property type="entry name" value="Glc/Gal-6P_isomerase"/>
</dbReference>
<dbReference type="InterPro" id="IPR037171">
    <property type="entry name" value="NagB/RpiA_transferase-like"/>
</dbReference>
<dbReference type="InterPro" id="IPR039104">
    <property type="entry name" value="PGLS"/>
</dbReference>
<dbReference type="NCBIfam" id="TIGR01198">
    <property type="entry name" value="pgl"/>
    <property type="match status" value="1"/>
</dbReference>
<dbReference type="PANTHER" id="PTHR11054">
    <property type="entry name" value="6-PHOSPHOGLUCONOLACTONASE"/>
    <property type="match status" value="1"/>
</dbReference>
<dbReference type="PANTHER" id="PTHR11054:SF0">
    <property type="entry name" value="6-PHOSPHOGLUCONOLACTONASE"/>
    <property type="match status" value="1"/>
</dbReference>
<dbReference type="Pfam" id="PF01182">
    <property type="entry name" value="Glucosamine_iso"/>
    <property type="match status" value="1"/>
</dbReference>
<dbReference type="SUPFAM" id="SSF100950">
    <property type="entry name" value="NagB/RpiA/CoA transferase-like"/>
    <property type="match status" value="1"/>
</dbReference>
<organism>
    <name type="scientific">Homo sapiens</name>
    <name type="common">Human</name>
    <dbReference type="NCBI Taxonomy" id="9606"/>
    <lineage>
        <taxon>Eukaryota</taxon>
        <taxon>Metazoa</taxon>
        <taxon>Chordata</taxon>
        <taxon>Craniata</taxon>
        <taxon>Vertebrata</taxon>
        <taxon>Euteleostomi</taxon>
        <taxon>Mammalia</taxon>
        <taxon>Eutheria</taxon>
        <taxon>Euarchontoglires</taxon>
        <taxon>Primates</taxon>
        <taxon>Haplorrhini</taxon>
        <taxon>Catarrhini</taxon>
        <taxon>Hominidae</taxon>
        <taxon>Homo</taxon>
    </lineage>
</organism>
<feature type="initiator methionine" description="Removed" evidence="5 8">
    <location>
        <position position="1"/>
    </location>
</feature>
<feature type="chain" id="PRO_0000090078" description="6-phosphogluconolactonase">
    <location>
        <begin position="2"/>
        <end position="258"/>
    </location>
</feature>
<feature type="modified residue" description="N-acetylalanine" evidence="5 8">
    <location>
        <position position="2"/>
    </location>
</feature>
<feature type="modified residue" description="Phosphoserine" evidence="7">
    <location>
        <position position="49"/>
    </location>
</feature>
<feature type="modified residue" description="N6-acetyllysine" evidence="6">
    <location>
        <position position="180"/>
    </location>
</feature>
<sequence>MAAPAPGLISVFSSSQELGAALAQLVAQRAACCLAGARARFALGLSGGSLVSMLARELPAAVAPAGPASLARWTLGFCDERLVPFDHAESTYGLYRTHLLSRLPIPESQVITINPELPVEEAAEDYAKKLRQAFQGDSIPVFDLLILGVGPDGHTCSLFPDHPLLQEREKIVAPISDSPKPPPQRVTLTLPVLNAARTVIFVATGEGKAAVLKRILEDQEENPLPAALVQPHTGKLCWFLDEAAARLLTVPFEKHSTL</sequence>
<keyword id="KW-0007">Acetylation</keyword>
<keyword id="KW-0963">Cytoplasm</keyword>
<keyword id="KW-0903">Direct protein sequencing</keyword>
<keyword id="KW-0378">Hydrolase</keyword>
<keyword id="KW-0597">Phosphoprotein</keyword>
<keyword id="KW-1267">Proteomics identification</keyword>
<keyword id="KW-1185">Reference proteome</keyword>
<name>6PGL_HUMAN</name>
<proteinExistence type="evidence at protein level"/>
<reference key="1">
    <citation type="journal article" date="1999" name="FEBS Lett.">
        <title>Identification of the cDNA encoding human 6-phosphogluconolactonase, the enzyme catalyzing the second step of the pentose phosphate pathway.</title>
        <authorList>
            <person name="Collard F."/>
            <person name="Collet J.-F."/>
            <person name="Gerin I."/>
            <person name="Veiga-da-Cunha M."/>
            <person name="van Schaftingen E."/>
        </authorList>
    </citation>
    <scope>NUCLEOTIDE SEQUENCE [MRNA]</scope>
    <scope>CATALYTIC ACTIVITY</scope>
    <scope>FUNCTION</scope>
</reference>
<reference key="2">
    <citation type="journal article" date="2004" name="Genome Res.">
        <title>The status, quality, and expansion of the NIH full-length cDNA project: the Mammalian Gene Collection (MGC).</title>
        <authorList>
            <consortium name="The MGC Project Team"/>
        </authorList>
    </citation>
    <scope>NUCLEOTIDE SEQUENCE [LARGE SCALE MRNA]</scope>
    <source>
        <tissue>Uterus</tissue>
    </source>
</reference>
<reference key="3">
    <citation type="submission" date="2008-12" db="UniProtKB">
        <authorList>
            <person name="Lubec G."/>
            <person name="Vishwanath V."/>
            <person name="Chen W.-Q."/>
            <person name="Sun Y."/>
        </authorList>
    </citation>
    <scope>PROTEIN SEQUENCE OF 41-72 AND 82-96</scope>
    <scope>IDENTIFICATION BY MASS SPECTROMETRY</scope>
    <source>
        <tissue>Brain</tissue>
        <tissue>Cajal-Retzius cell</tissue>
        <tissue>Fetal brain cortex</tissue>
    </source>
</reference>
<reference key="4">
    <citation type="submission" date="1998-08" db="EMBL/GenBank/DDBJ databases">
        <title>Full-insert sequence of mapped XREF EST.</title>
        <authorList>
            <person name="Barrow I.K.-P."/>
            <person name="Boguski M.S."/>
            <person name="Touchman J.W."/>
            <person name="Spencer F."/>
        </authorList>
    </citation>
    <scope>NUCLEOTIDE SEQUENCE [LARGE SCALE MRNA] OF 97-242</scope>
</reference>
<reference key="5">
    <citation type="journal article" date="2009" name="Anal. Chem.">
        <title>Lys-N and trypsin cover complementary parts of the phosphoproteome in a refined SCX-based approach.</title>
        <authorList>
            <person name="Gauci S."/>
            <person name="Helbig A.O."/>
            <person name="Slijper M."/>
            <person name="Krijgsveld J."/>
            <person name="Heck A.J."/>
            <person name="Mohammed S."/>
        </authorList>
    </citation>
    <scope>ACETYLATION [LARGE SCALE ANALYSIS] AT ALA-2</scope>
    <scope>CLEAVAGE OF INITIATOR METHIONINE [LARGE SCALE ANALYSIS]</scope>
    <scope>IDENTIFICATION BY MASS SPECTROMETRY [LARGE SCALE ANALYSIS]</scope>
</reference>
<reference key="6">
    <citation type="journal article" date="2009" name="Science">
        <title>Lysine acetylation targets protein complexes and co-regulates major cellular functions.</title>
        <authorList>
            <person name="Choudhary C."/>
            <person name="Kumar C."/>
            <person name="Gnad F."/>
            <person name="Nielsen M.L."/>
            <person name="Rehman M."/>
            <person name="Walther T.C."/>
            <person name="Olsen J.V."/>
            <person name="Mann M."/>
        </authorList>
    </citation>
    <scope>ACETYLATION [LARGE SCALE ANALYSIS] AT LYS-180</scope>
    <scope>IDENTIFICATION BY MASS SPECTROMETRY [LARGE SCALE ANALYSIS]</scope>
</reference>
<reference key="7">
    <citation type="journal article" date="2011" name="BMC Syst. Biol.">
        <title>Initial characterization of the human central proteome.</title>
        <authorList>
            <person name="Burkard T.R."/>
            <person name="Planyavsky M."/>
            <person name="Kaupe I."/>
            <person name="Breitwieser F.P."/>
            <person name="Buerckstuemmer T."/>
            <person name="Bennett K.L."/>
            <person name="Superti-Furga G."/>
            <person name="Colinge J."/>
        </authorList>
    </citation>
    <scope>IDENTIFICATION BY MASS SPECTROMETRY [LARGE SCALE ANALYSIS]</scope>
</reference>
<reference key="8">
    <citation type="journal article" date="2014" name="J. Proteomics">
        <title>An enzyme assisted RP-RPLC approach for in-depth analysis of human liver phosphoproteome.</title>
        <authorList>
            <person name="Bian Y."/>
            <person name="Song C."/>
            <person name="Cheng K."/>
            <person name="Dong M."/>
            <person name="Wang F."/>
            <person name="Huang J."/>
            <person name="Sun D."/>
            <person name="Wang L."/>
            <person name="Ye M."/>
            <person name="Zou H."/>
        </authorList>
    </citation>
    <scope>PHOSPHORYLATION [LARGE SCALE ANALYSIS] AT SER-49</scope>
    <scope>IDENTIFICATION BY MASS SPECTROMETRY [LARGE SCALE ANALYSIS]</scope>
    <source>
        <tissue>Liver</tissue>
    </source>
</reference>
<reference key="9">
    <citation type="journal article" date="2015" name="Proteomics">
        <title>N-terminome analysis of the human mitochondrial proteome.</title>
        <authorList>
            <person name="Vaca Jacome A.S."/>
            <person name="Rabilloud T."/>
            <person name="Schaeffer-Reiss C."/>
            <person name="Rompais M."/>
            <person name="Ayoub D."/>
            <person name="Lane L."/>
            <person name="Bairoch A."/>
            <person name="Van Dorsselaer A."/>
            <person name="Carapito C."/>
        </authorList>
    </citation>
    <scope>ACETYLATION [LARGE SCALE ANALYSIS] AT ALA-2</scope>
    <scope>CLEAVAGE OF INITIATOR METHIONINE [LARGE SCALE ANALYSIS]</scope>
    <scope>IDENTIFICATION BY MASS SPECTROMETRY [LARGE SCALE ANALYSIS]</scope>
</reference>
<protein>
    <recommendedName>
        <fullName evidence="3">6-phosphogluconolactonase</fullName>
        <shortName>6PGL</shortName>
        <ecNumber evidence="2">3.1.1.31</ecNumber>
    </recommendedName>
</protein>
<accession>O95336</accession>